<proteinExistence type="predicted"/>
<reference key="1">
    <citation type="journal article" date="1996" name="Nucleic Acids Res.">
        <title>Complete sequence analysis of the genome of the bacterium Mycoplasma pneumoniae.</title>
        <authorList>
            <person name="Himmelreich R."/>
            <person name="Hilbert H."/>
            <person name="Plagens H."/>
            <person name="Pirkl E."/>
            <person name="Li B.-C."/>
            <person name="Herrmann R."/>
        </authorList>
    </citation>
    <scope>NUCLEOTIDE SEQUENCE [LARGE SCALE GENOMIC DNA]</scope>
    <source>
        <strain>ATCC 29342 / M129 / Subtype 1</strain>
    </source>
</reference>
<sequence length="282" mass="33296">MNKGDAIDFLCEKLNLQPTAVAHVEQIHSGFTNFSFFTELKDGSKYQVRLARKDVPLNRRNEQIILDLVTPIFGNPFVYFDVTAGNAIKKWIEGKQPKRPTRLFLEQLVASLKKVHAVEWKQFANEIWIFDPLIYFNQTKLPDFYKKLYVELTDKHKAIPKTLCHHDSTFDNLVYTPKKQVVLIDFEWSCVDNPYYEIANIIREELTIETANQIIDLYGSLDKKLVFETVIYVLLFAFQWTEIMPQTQQIIDYKKWVQKRLNYFLKALFPNTWKIAKTIPLY</sequence>
<keyword id="KW-1185">Reference proteome</keyword>
<dbReference type="EMBL" id="U00089">
    <property type="protein sequence ID" value="AAB95958.1"/>
    <property type="molecule type" value="Genomic_DNA"/>
</dbReference>
<dbReference type="PIR" id="S73636">
    <property type="entry name" value="S73636"/>
</dbReference>
<dbReference type="RefSeq" id="NP_110221.1">
    <property type="nucleotide sequence ID" value="NC_000912.1"/>
</dbReference>
<dbReference type="RefSeq" id="WP_010874889.1">
    <property type="nucleotide sequence ID" value="NC_000912.1"/>
</dbReference>
<dbReference type="SMR" id="P75246"/>
<dbReference type="STRING" id="272634.MPN_532"/>
<dbReference type="EnsemblBacteria" id="AAB95958">
    <property type="protein sequence ID" value="AAB95958"/>
    <property type="gene ID" value="MPN_532"/>
</dbReference>
<dbReference type="KEGG" id="mpn:MPN_532"/>
<dbReference type="PATRIC" id="fig|272634.6.peg.593"/>
<dbReference type="HOGENOM" id="CLU_089619_0_0_14"/>
<dbReference type="OrthoDB" id="400457at2"/>
<dbReference type="BioCyc" id="MPNE272634:G1GJ3-878-MONOMER"/>
<dbReference type="Proteomes" id="UP000000808">
    <property type="component" value="Chromosome"/>
</dbReference>
<dbReference type="Gene3D" id="3.90.1200.10">
    <property type="match status" value="1"/>
</dbReference>
<dbReference type="Gene3D" id="3.30.200.20">
    <property type="entry name" value="Phosphorylase Kinase, domain 1"/>
    <property type="match status" value="1"/>
</dbReference>
<dbReference type="InterPro" id="IPR002575">
    <property type="entry name" value="Aminoglycoside_PTrfase"/>
</dbReference>
<dbReference type="InterPro" id="IPR011009">
    <property type="entry name" value="Kinase-like_dom_sf"/>
</dbReference>
<dbReference type="Pfam" id="PF01636">
    <property type="entry name" value="APH"/>
    <property type="match status" value="1"/>
</dbReference>
<dbReference type="SUPFAM" id="SSF56112">
    <property type="entry name" value="Protein kinase-like (PK-like)"/>
    <property type="match status" value="1"/>
</dbReference>
<organism>
    <name type="scientific">Mycoplasma pneumoniae (strain ATCC 29342 / M129 / Subtype 1)</name>
    <name type="common">Mycoplasmoides pneumoniae</name>
    <dbReference type="NCBI Taxonomy" id="272634"/>
    <lineage>
        <taxon>Bacteria</taxon>
        <taxon>Bacillati</taxon>
        <taxon>Mycoplasmatota</taxon>
        <taxon>Mycoplasmoidales</taxon>
        <taxon>Mycoplasmoidaceae</taxon>
        <taxon>Mycoplasmoides</taxon>
    </lineage>
</organism>
<protein>
    <recommendedName>
        <fullName>Uncharacterized protein MG356 homolog</fullName>
    </recommendedName>
</protein>
<accession>P75246</accession>
<feature type="chain" id="PRO_0000210564" description="Uncharacterized protein MG356 homolog">
    <location>
        <begin position="1"/>
        <end position="282"/>
    </location>
</feature>
<gene>
    <name type="ordered locus">MPN_532</name>
    <name type="ORF">G12_orf282b</name>
    <name type="ORF">MP310</name>
</gene>
<name>Y532_MYCPN</name>